<organism>
    <name type="scientific">Escherichia coli O139:H28 (strain E24377A / ETEC)</name>
    <dbReference type="NCBI Taxonomy" id="331111"/>
    <lineage>
        <taxon>Bacteria</taxon>
        <taxon>Pseudomonadati</taxon>
        <taxon>Pseudomonadota</taxon>
        <taxon>Gammaproteobacteria</taxon>
        <taxon>Enterobacterales</taxon>
        <taxon>Enterobacteriaceae</taxon>
        <taxon>Escherichia</taxon>
    </lineage>
</organism>
<name>PEPB_ECO24</name>
<dbReference type="EC" id="3.4.11.23" evidence="1"/>
<dbReference type="EMBL" id="CP000800">
    <property type="protein sequence ID" value="ABV17133.1"/>
    <property type="molecule type" value="Genomic_DNA"/>
</dbReference>
<dbReference type="RefSeq" id="WP_000133579.1">
    <property type="nucleotide sequence ID" value="NC_009801.1"/>
</dbReference>
<dbReference type="SMR" id="A7ZPW6"/>
<dbReference type="MEROPS" id="M17.004"/>
<dbReference type="GeneID" id="75206216"/>
<dbReference type="KEGG" id="ecw:EcE24377A_2807"/>
<dbReference type="HOGENOM" id="CLU_013734_7_1_6"/>
<dbReference type="Proteomes" id="UP000001122">
    <property type="component" value="Chromosome"/>
</dbReference>
<dbReference type="GO" id="GO:0005737">
    <property type="term" value="C:cytoplasm"/>
    <property type="evidence" value="ECO:0007669"/>
    <property type="project" value="UniProtKB-SubCell"/>
</dbReference>
<dbReference type="GO" id="GO:0030145">
    <property type="term" value="F:manganese ion binding"/>
    <property type="evidence" value="ECO:0007669"/>
    <property type="project" value="UniProtKB-UniRule"/>
</dbReference>
<dbReference type="GO" id="GO:0070006">
    <property type="term" value="F:metalloaminopeptidase activity"/>
    <property type="evidence" value="ECO:0007669"/>
    <property type="project" value="InterPro"/>
</dbReference>
<dbReference type="GO" id="GO:0006508">
    <property type="term" value="P:proteolysis"/>
    <property type="evidence" value="ECO:0007669"/>
    <property type="project" value="UniProtKB-UniRule"/>
</dbReference>
<dbReference type="CDD" id="cd00433">
    <property type="entry name" value="Peptidase_M17"/>
    <property type="match status" value="1"/>
</dbReference>
<dbReference type="FunFam" id="3.40.630.10:FF:000037">
    <property type="entry name" value="Peptidase B"/>
    <property type="match status" value="1"/>
</dbReference>
<dbReference type="Gene3D" id="3.40.630.10">
    <property type="entry name" value="Zn peptidases"/>
    <property type="match status" value="1"/>
</dbReference>
<dbReference type="HAMAP" id="MF_00504">
    <property type="entry name" value="Aminopeptidase_M17"/>
    <property type="match status" value="1"/>
</dbReference>
<dbReference type="InterPro" id="IPR011356">
    <property type="entry name" value="Leucine_aapep/pepB"/>
</dbReference>
<dbReference type="InterPro" id="IPR047620">
    <property type="entry name" value="M17_PepB-like_N"/>
</dbReference>
<dbReference type="InterPro" id="IPR008330">
    <property type="entry name" value="Pept_M17_PepB"/>
</dbReference>
<dbReference type="InterPro" id="IPR000819">
    <property type="entry name" value="Peptidase_M17_C"/>
</dbReference>
<dbReference type="NCBIfam" id="NF003450">
    <property type="entry name" value="PRK05015.1"/>
    <property type="match status" value="1"/>
</dbReference>
<dbReference type="PANTHER" id="PTHR11963">
    <property type="entry name" value="LEUCINE AMINOPEPTIDASE-RELATED"/>
    <property type="match status" value="1"/>
</dbReference>
<dbReference type="PANTHER" id="PTHR11963:SF20">
    <property type="entry name" value="PEPTIDASE B"/>
    <property type="match status" value="1"/>
</dbReference>
<dbReference type="Pfam" id="PF12404">
    <property type="entry name" value="DUF3663"/>
    <property type="match status" value="1"/>
</dbReference>
<dbReference type="Pfam" id="PF00883">
    <property type="entry name" value="Peptidase_M17"/>
    <property type="match status" value="1"/>
</dbReference>
<dbReference type="PIRSF" id="PIRSF036388">
    <property type="entry name" value="Ctsl_amnpptdse_B"/>
    <property type="match status" value="1"/>
</dbReference>
<dbReference type="PRINTS" id="PR00481">
    <property type="entry name" value="LAMNOPPTDASE"/>
</dbReference>
<dbReference type="SUPFAM" id="SSF53187">
    <property type="entry name" value="Zn-dependent exopeptidases"/>
    <property type="match status" value="1"/>
</dbReference>
<dbReference type="PROSITE" id="PS00631">
    <property type="entry name" value="CYTOSOL_AP"/>
    <property type="match status" value="1"/>
</dbReference>
<sequence>MTEAMKITLSTQPADARWGEKATYSINNDGITLHLNGADDLGLIQRAARKIDGLGIKHVQLSGEGWDADRCWAFWQGYKAPKGTRKVEWPDLDDAQRQELDNRLMIIDWVRDTINAPAEELGPSQLAQRAVDLISNVAGDRVTYRITKGEDLREQGYMGLHTVGRGSERSPVLLALDYNPTGDKEAPVYACLVGKGITFDSGGYSIKQTAFMDSMKSDMGGAATVTGALAFAITRGLNKRVKLFLCCADNLISGNAFKLGDIITYRNGKKVEVMNTDAEGRLVLADGLIDASAQKPELIIDAATLTGAAKTALGNDYHALFSFDDALAGRLLASASQENEPFWRLPLAEFHRSQLPSNFAELNNTGSAAYPAGASTAAGFLSHFVENYQQGWLHIDCSATYRKAPVEQWSAGATGLGVRTIANLLTA</sequence>
<comment type="function">
    <text evidence="1">Probably plays an important role in intracellular peptide degradation.</text>
</comment>
<comment type="catalytic activity">
    <reaction evidence="1">
        <text>Release of an N-terminal amino acid, Xaa, from a peptide or arylamide. Xaa is preferably Glu or Asp but may be other amino acids, including Leu, Met, His, Cys and Gln.</text>
        <dbReference type="EC" id="3.4.11.23"/>
    </reaction>
</comment>
<comment type="cofactor">
    <cofactor evidence="1">
        <name>Mn(2+)</name>
        <dbReference type="ChEBI" id="CHEBI:29035"/>
    </cofactor>
    <text evidence="1">Binds 2 manganese ions per subunit.</text>
</comment>
<comment type="subunit">
    <text evidence="1">Homohexamer.</text>
</comment>
<comment type="subcellular location">
    <subcellularLocation>
        <location evidence="1">Cytoplasm</location>
    </subcellularLocation>
</comment>
<comment type="similarity">
    <text evidence="1">Belongs to the peptidase M17 family.</text>
</comment>
<keyword id="KW-0031">Aminopeptidase</keyword>
<keyword id="KW-0963">Cytoplasm</keyword>
<keyword id="KW-0378">Hydrolase</keyword>
<keyword id="KW-0464">Manganese</keyword>
<keyword id="KW-0479">Metal-binding</keyword>
<keyword id="KW-0645">Protease</keyword>
<keyword id="KW-1185">Reference proteome</keyword>
<evidence type="ECO:0000255" key="1">
    <source>
        <dbReference type="HAMAP-Rule" id="MF_00504"/>
    </source>
</evidence>
<feature type="chain" id="PRO_1000060515" description="Peptidase B">
    <location>
        <begin position="1"/>
        <end position="427"/>
    </location>
</feature>
<feature type="active site" evidence="1">
    <location>
        <position position="207"/>
    </location>
</feature>
<feature type="active site" evidence="1">
    <location>
        <position position="281"/>
    </location>
</feature>
<feature type="binding site" evidence="1">
    <location>
        <position position="195"/>
    </location>
    <ligand>
        <name>Mn(2+)</name>
        <dbReference type="ChEBI" id="CHEBI:29035"/>
        <label>2</label>
    </ligand>
</feature>
<feature type="binding site" evidence="1">
    <location>
        <position position="200"/>
    </location>
    <ligand>
        <name>Mn(2+)</name>
        <dbReference type="ChEBI" id="CHEBI:29035"/>
        <label>1</label>
    </ligand>
</feature>
<feature type="binding site" evidence="1">
    <location>
        <position position="200"/>
    </location>
    <ligand>
        <name>Mn(2+)</name>
        <dbReference type="ChEBI" id="CHEBI:29035"/>
        <label>2</label>
    </ligand>
</feature>
<feature type="binding site" evidence="1">
    <location>
        <position position="218"/>
    </location>
    <ligand>
        <name>Mn(2+)</name>
        <dbReference type="ChEBI" id="CHEBI:29035"/>
        <label>2</label>
    </ligand>
</feature>
<feature type="binding site" evidence="1">
    <location>
        <position position="277"/>
    </location>
    <ligand>
        <name>Mn(2+)</name>
        <dbReference type="ChEBI" id="CHEBI:29035"/>
        <label>1</label>
    </ligand>
</feature>
<feature type="binding site" evidence="1">
    <location>
        <position position="279"/>
    </location>
    <ligand>
        <name>Mn(2+)</name>
        <dbReference type="ChEBI" id="CHEBI:29035"/>
        <label>1</label>
    </ligand>
</feature>
<feature type="binding site" evidence="1">
    <location>
        <position position="279"/>
    </location>
    <ligand>
        <name>Mn(2+)</name>
        <dbReference type="ChEBI" id="CHEBI:29035"/>
        <label>2</label>
    </ligand>
</feature>
<gene>
    <name evidence="1" type="primary">pepB</name>
    <name type="ordered locus">EcE24377A_2807</name>
</gene>
<reference key="1">
    <citation type="journal article" date="2008" name="J. Bacteriol.">
        <title>The pangenome structure of Escherichia coli: comparative genomic analysis of E. coli commensal and pathogenic isolates.</title>
        <authorList>
            <person name="Rasko D.A."/>
            <person name="Rosovitz M.J."/>
            <person name="Myers G.S.A."/>
            <person name="Mongodin E.F."/>
            <person name="Fricke W.F."/>
            <person name="Gajer P."/>
            <person name="Crabtree J."/>
            <person name="Sebaihia M."/>
            <person name="Thomson N.R."/>
            <person name="Chaudhuri R."/>
            <person name="Henderson I.R."/>
            <person name="Sperandio V."/>
            <person name="Ravel J."/>
        </authorList>
    </citation>
    <scope>NUCLEOTIDE SEQUENCE [LARGE SCALE GENOMIC DNA]</scope>
    <source>
        <strain>E24377A / ETEC</strain>
    </source>
</reference>
<accession>A7ZPW6</accession>
<protein>
    <recommendedName>
        <fullName evidence="1">Peptidase B</fullName>
        <ecNumber evidence="1">3.4.11.23</ecNumber>
    </recommendedName>
    <alternativeName>
        <fullName evidence="1">Aminopeptidase B</fullName>
    </alternativeName>
</protein>
<proteinExistence type="inferred from homology"/>